<feature type="chain" id="PRO_1000143795" description="Large ribosomal subunit protein bL21">
    <location>
        <begin position="1"/>
        <end position="103"/>
    </location>
</feature>
<name>RL21_ECOSM</name>
<dbReference type="EMBL" id="CP000970">
    <property type="protein sequence ID" value="ACB19936.1"/>
    <property type="molecule type" value="Genomic_DNA"/>
</dbReference>
<dbReference type="RefSeq" id="WP_000271401.1">
    <property type="nucleotide sequence ID" value="NC_010498.1"/>
</dbReference>
<dbReference type="SMR" id="B1LGF2"/>
<dbReference type="GeneID" id="93778795"/>
<dbReference type="KEGG" id="ecm:EcSMS35_3482"/>
<dbReference type="HOGENOM" id="CLU_061463_3_3_6"/>
<dbReference type="Proteomes" id="UP000007011">
    <property type="component" value="Chromosome"/>
</dbReference>
<dbReference type="GO" id="GO:0005737">
    <property type="term" value="C:cytoplasm"/>
    <property type="evidence" value="ECO:0007669"/>
    <property type="project" value="UniProtKB-ARBA"/>
</dbReference>
<dbReference type="GO" id="GO:1990904">
    <property type="term" value="C:ribonucleoprotein complex"/>
    <property type="evidence" value="ECO:0007669"/>
    <property type="project" value="UniProtKB-KW"/>
</dbReference>
<dbReference type="GO" id="GO:0005840">
    <property type="term" value="C:ribosome"/>
    <property type="evidence" value="ECO:0007669"/>
    <property type="project" value="UniProtKB-KW"/>
</dbReference>
<dbReference type="GO" id="GO:0019843">
    <property type="term" value="F:rRNA binding"/>
    <property type="evidence" value="ECO:0007669"/>
    <property type="project" value="UniProtKB-UniRule"/>
</dbReference>
<dbReference type="GO" id="GO:0003735">
    <property type="term" value="F:structural constituent of ribosome"/>
    <property type="evidence" value="ECO:0007669"/>
    <property type="project" value="InterPro"/>
</dbReference>
<dbReference type="GO" id="GO:0006412">
    <property type="term" value="P:translation"/>
    <property type="evidence" value="ECO:0007669"/>
    <property type="project" value="UniProtKB-UniRule"/>
</dbReference>
<dbReference type="HAMAP" id="MF_01363">
    <property type="entry name" value="Ribosomal_bL21"/>
    <property type="match status" value="1"/>
</dbReference>
<dbReference type="InterPro" id="IPR028909">
    <property type="entry name" value="bL21-like"/>
</dbReference>
<dbReference type="InterPro" id="IPR036164">
    <property type="entry name" value="bL21-like_sf"/>
</dbReference>
<dbReference type="InterPro" id="IPR001787">
    <property type="entry name" value="Ribosomal_bL21"/>
</dbReference>
<dbReference type="InterPro" id="IPR018258">
    <property type="entry name" value="Ribosomal_bL21_CS"/>
</dbReference>
<dbReference type="NCBIfam" id="TIGR00061">
    <property type="entry name" value="L21"/>
    <property type="match status" value="1"/>
</dbReference>
<dbReference type="PANTHER" id="PTHR21349">
    <property type="entry name" value="50S RIBOSOMAL PROTEIN L21"/>
    <property type="match status" value="1"/>
</dbReference>
<dbReference type="PANTHER" id="PTHR21349:SF0">
    <property type="entry name" value="LARGE RIBOSOMAL SUBUNIT PROTEIN BL21M"/>
    <property type="match status" value="1"/>
</dbReference>
<dbReference type="Pfam" id="PF00829">
    <property type="entry name" value="Ribosomal_L21p"/>
    <property type="match status" value="1"/>
</dbReference>
<dbReference type="SUPFAM" id="SSF141091">
    <property type="entry name" value="L21p-like"/>
    <property type="match status" value="1"/>
</dbReference>
<dbReference type="PROSITE" id="PS01169">
    <property type="entry name" value="RIBOSOMAL_L21"/>
    <property type="match status" value="1"/>
</dbReference>
<gene>
    <name evidence="1" type="primary">rplU</name>
    <name type="ordered locus">EcSMS35_3482</name>
</gene>
<comment type="function">
    <text evidence="1">This protein binds to 23S rRNA in the presence of protein L20.</text>
</comment>
<comment type="subunit">
    <text evidence="1">Part of the 50S ribosomal subunit. Contacts protein L20.</text>
</comment>
<comment type="similarity">
    <text evidence="1">Belongs to the bacterial ribosomal protein bL21 family.</text>
</comment>
<protein>
    <recommendedName>
        <fullName evidence="1">Large ribosomal subunit protein bL21</fullName>
    </recommendedName>
    <alternativeName>
        <fullName evidence="2">50S ribosomal protein L21</fullName>
    </alternativeName>
</protein>
<proteinExistence type="inferred from homology"/>
<evidence type="ECO:0000255" key="1">
    <source>
        <dbReference type="HAMAP-Rule" id="MF_01363"/>
    </source>
</evidence>
<evidence type="ECO:0000305" key="2"/>
<keyword id="KW-0687">Ribonucleoprotein</keyword>
<keyword id="KW-0689">Ribosomal protein</keyword>
<keyword id="KW-0694">RNA-binding</keyword>
<keyword id="KW-0699">rRNA-binding</keyword>
<sequence length="103" mass="11564">MYAVFQSGGKQHRVSEGQTVRLEKLDIATGETVEFAEVLMIANGEEVKIGVPFVDGGVIKAEVVAHGRGEKVKIVKFRRRKHYRKQQGHRQWFTDVKITGISA</sequence>
<accession>B1LGF2</accession>
<organism>
    <name type="scientific">Escherichia coli (strain SMS-3-5 / SECEC)</name>
    <dbReference type="NCBI Taxonomy" id="439855"/>
    <lineage>
        <taxon>Bacteria</taxon>
        <taxon>Pseudomonadati</taxon>
        <taxon>Pseudomonadota</taxon>
        <taxon>Gammaproteobacteria</taxon>
        <taxon>Enterobacterales</taxon>
        <taxon>Enterobacteriaceae</taxon>
        <taxon>Escherichia</taxon>
    </lineage>
</organism>
<reference key="1">
    <citation type="journal article" date="2008" name="J. Bacteriol.">
        <title>Insights into the environmental resistance gene pool from the genome sequence of the multidrug-resistant environmental isolate Escherichia coli SMS-3-5.</title>
        <authorList>
            <person name="Fricke W.F."/>
            <person name="Wright M.S."/>
            <person name="Lindell A.H."/>
            <person name="Harkins D.M."/>
            <person name="Baker-Austin C."/>
            <person name="Ravel J."/>
            <person name="Stepanauskas R."/>
        </authorList>
    </citation>
    <scope>NUCLEOTIDE SEQUENCE [LARGE SCALE GENOMIC DNA]</scope>
    <source>
        <strain>SMS-3-5 / SECEC</strain>
    </source>
</reference>